<proteinExistence type="inferred from homology"/>
<reference key="1">
    <citation type="journal article" date="2008" name="PLoS Genet.">
        <title>Complete genome sequence of the complex carbohydrate-degrading marine bacterium, Saccharophagus degradans strain 2-40 T.</title>
        <authorList>
            <person name="Weiner R.M."/>
            <person name="Taylor L.E. II"/>
            <person name="Henrissat B."/>
            <person name="Hauser L."/>
            <person name="Land M."/>
            <person name="Coutinho P.M."/>
            <person name="Rancurel C."/>
            <person name="Saunders E.H."/>
            <person name="Longmire A.G."/>
            <person name="Zhang H."/>
            <person name="Bayer E.A."/>
            <person name="Gilbert H.J."/>
            <person name="Larimer F."/>
            <person name="Zhulin I.B."/>
            <person name="Ekborg N.A."/>
            <person name="Lamed R."/>
            <person name="Richardson P.M."/>
            <person name="Borovok I."/>
            <person name="Hutcheson S."/>
        </authorList>
    </citation>
    <scope>NUCLEOTIDE SEQUENCE [LARGE SCALE GENOMIC DNA]</scope>
    <source>
        <strain>2-40 / ATCC 43961 / DSM 17024</strain>
    </source>
</reference>
<evidence type="ECO:0000255" key="1">
    <source>
        <dbReference type="HAMAP-Rule" id="MF_01384"/>
    </source>
</evidence>
<organism>
    <name type="scientific">Saccharophagus degradans (strain 2-40 / ATCC 43961 / DSM 17024)</name>
    <dbReference type="NCBI Taxonomy" id="203122"/>
    <lineage>
        <taxon>Bacteria</taxon>
        <taxon>Pseudomonadati</taxon>
        <taxon>Pseudomonadota</taxon>
        <taxon>Gammaproteobacteria</taxon>
        <taxon>Cellvibrionales</taxon>
        <taxon>Cellvibrionaceae</taxon>
        <taxon>Saccharophagus</taxon>
    </lineage>
</organism>
<gene>
    <name evidence="1" type="primary">ureD</name>
    <name type="ordered locus">Sde_0218</name>
</gene>
<feature type="chain" id="PRO_0000340515" description="Urease accessory protein UreD">
    <location>
        <begin position="1"/>
        <end position="295"/>
    </location>
</feature>
<protein>
    <recommendedName>
        <fullName evidence="1">Urease accessory protein UreD</fullName>
    </recommendedName>
</protein>
<accession>Q21P97</accession>
<name>URED_SACD2</name>
<keyword id="KW-0143">Chaperone</keyword>
<keyword id="KW-0963">Cytoplasm</keyword>
<keyword id="KW-0996">Nickel insertion</keyword>
<keyword id="KW-1185">Reference proteome</keyword>
<comment type="function">
    <text evidence="1">Required for maturation of urease via the functional incorporation of the urease nickel metallocenter.</text>
</comment>
<comment type="subunit">
    <text evidence="1">UreD, UreF and UreG form a complex that acts as a GTP-hydrolysis-dependent molecular chaperone, activating the urease apoprotein by helping to assemble the nickel containing metallocenter of UreC. The UreE protein probably delivers the nickel.</text>
</comment>
<comment type="subcellular location">
    <subcellularLocation>
        <location evidence="1">Cytoplasm</location>
    </subcellularLocation>
</comment>
<comment type="similarity">
    <text evidence="1">Belongs to the UreD family.</text>
</comment>
<sequence length="295" mass="32659">MNAILPKISTLPAKPAPTREWLAGIDLLLAKRYQRTALMSSKHFGPLRVQRPFYPEPDGCCHIYLLHPPGGLVIGDNLHIGASLQQGAQALITTPSAGKLYGAKGASEKQGQQVEFNLAAESCLEWLPQETIIFDGANGTLSTKVNLTGNAQYFGWDIIRLGRVASGEPFNTGTCAQRLQLWRDGLPLFIEKTKFEASSNMHREKWGLQNANTCATLTATLQLTRDSIDEMLEALAQLGVTNTGEWGLTQKESLFIVRYLGNSITDCRKGFEFIWQQTRAVFNGKPAEVPRIWRT</sequence>
<dbReference type="EMBL" id="CP000282">
    <property type="protein sequence ID" value="ABD79482.1"/>
    <property type="molecule type" value="Genomic_DNA"/>
</dbReference>
<dbReference type="RefSeq" id="WP_011466706.1">
    <property type="nucleotide sequence ID" value="NC_007912.1"/>
</dbReference>
<dbReference type="SMR" id="Q21P97"/>
<dbReference type="STRING" id="203122.Sde_0218"/>
<dbReference type="GeneID" id="98611924"/>
<dbReference type="KEGG" id="sde:Sde_0218"/>
<dbReference type="eggNOG" id="COG0829">
    <property type="taxonomic scope" value="Bacteria"/>
</dbReference>
<dbReference type="HOGENOM" id="CLU_056339_0_0_6"/>
<dbReference type="OrthoDB" id="9798842at2"/>
<dbReference type="Proteomes" id="UP000001947">
    <property type="component" value="Chromosome"/>
</dbReference>
<dbReference type="GO" id="GO:0005737">
    <property type="term" value="C:cytoplasm"/>
    <property type="evidence" value="ECO:0007669"/>
    <property type="project" value="UniProtKB-SubCell"/>
</dbReference>
<dbReference type="GO" id="GO:0016151">
    <property type="term" value="F:nickel cation binding"/>
    <property type="evidence" value="ECO:0007669"/>
    <property type="project" value="UniProtKB-UniRule"/>
</dbReference>
<dbReference type="HAMAP" id="MF_01384">
    <property type="entry name" value="UreD"/>
    <property type="match status" value="1"/>
</dbReference>
<dbReference type="InterPro" id="IPR002669">
    <property type="entry name" value="UreD"/>
</dbReference>
<dbReference type="PANTHER" id="PTHR33643">
    <property type="entry name" value="UREASE ACCESSORY PROTEIN D"/>
    <property type="match status" value="1"/>
</dbReference>
<dbReference type="PANTHER" id="PTHR33643:SF1">
    <property type="entry name" value="UREASE ACCESSORY PROTEIN D"/>
    <property type="match status" value="1"/>
</dbReference>
<dbReference type="Pfam" id="PF01774">
    <property type="entry name" value="UreD"/>
    <property type="match status" value="1"/>
</dbReference>